<evidence type="ECO:0000250" key="1">
    <source>
        <dbReference type="UniProtKB" id="Q53S58"/>
    </source>
</evidence>
<evidence type="ECO:0000255" key="2"/>
<evidence type="ECO:0000305" key="3"/>
<accession>Q66IS8</accession>
<keyword id="KW-0472">Membrane</keyword>
<keyword id="KW-0496">Mitochondrion</keyword>
<keyword id="KW-0999">Mitochondrion inner membrane</keyword>
<keyword id="KW-1185">Reference proteome</keyword>
<keyword id="KW-0812">Transmembrane</keyword>
<keyword id="KW-1133">Transmembrane helix</keyword>
<protein>
    <recommendedName>
        <fullName>Transmembrane protein 177</fullName>
    </recommendedName>
</protein>
<feature type="chain" id="PRO_0000282650" description="Transmembrane protein 177">
    <location>
        <begin position="1"/>
        <end position="310"/>
    </location>
</feature>
<feature type="topological domain" description="Mitochondrial matrix" evidence="3">
    <location>
        <begin position="1"/>
        <end position="17"/>
    </location>
</feature>
<feature type="transmembrane region" description="Helical" evidence="2">
    <location>
        <begin position="18"/>
        <end position="38"/>
    </location>
</feature>
<feature type="topological domain" description="Mitochondrial intermembrane" evidence="3">
    <location>
        <begin position="39"/>
        <end position="170"/>
    </location>
</feature>
<feature type="transmembrane region" description="Helical" evidence="2">
    <location>
        <begin position="171"/>
        <end position="191"/>
    </location>
</feature>
<feature type="topological domain" description="Mitochondrial matrix" evidence="3">
    <location>
        <begin position="192"/>
        <end position="201"/>
    </location>
</feature>
<feature type="transmembrane region" description="Helical" evidence="2">
    <location>
        <begin position="202"/>
        <end position="222"/>
    </location>
</feature>
<feature type="topological domain" description="Mitochondrial intermembrane" evidence="3">
    <location>
        <begin position="223"/>
        <end position="310"/>
    </location>
</feature>
<dbReference type="EMBL" id="BC081215">
    <property type="protein sequence ID" value="AAH81215.1"/>
    <property type="status" value="ALT_INIT"/>
    <property type="molecule type" value="mRNA"/>
</dbReference>
<dbReference type="AGR" id="Xenbase:XB-GENE-6254851"/>
<dbReference type="Xenbase" id="XB-GENE-6254851">
    <property type="gene designation" value="tmem177.L"/>
</dbReference>
<dbReference type="Proteomes" id="UP000186698">
    <property type="component" value="Unplaced"/>
</dbReference>
<dbReference type="GO" id="GO:0016020">
    <property type="term" value="C:membrane"/>
    <property type="evidence" value="ECO:0000318"/>
    <property type="project" value="GO_Central"/>
</dbReference>
<dbReference type="GO" id="GO:0005743">
    <property type="term" value="C:mitochondrial inner membrane"/>
    <property type="evidence" value="ECO:0000250"/>
    <property type="project" value="UniProtKB"/>
</dbReference>
<dbReference type="InterPro" id="IPR026620">
    <property type="entry name" value="TMEM177"/>
</dbReference>
<dbReference type="PANTHER" id="PTHR21824">
    <property type="entry name" value="TRANSMEMBRANE PROTEIN 177"/>
    <property type="match status" value="1"/>
</dbReference>
<dbReference type="PANTHER" id="PTHR21824:SF4">
    <property type="entry name" value="TRANSMEMBRANE PROTEIN 177"/>
    <property type="match status" value="1"/>
</dbReference>
<reference key="1">
    <citation type="submission" date="2004-08" db="EMBL/GenBank/DDBJ databases">
        <authorList>
            <consortium name="NIH - Xenopus Gene Collection (XGC) project"/>
        </authorList>
    </citation>
    <scope>NUCLEOTIDE SEQUENCE [LARGE SCALE MRNA]</scope>
    <source>
        <tissue>Brain</tissue>
    </source>
</reference>
<sequence length="310" mass="34198">MSSPFLWRFLSFTQKYRGTLLAVSSVGLFAANISYHVAPEQTFRKLYQGWSKGEPVQLTAKLQGLFQEVLEETHMGVTSSYVPFSAFGFHPVSAGIPWLPSGCLIGIPFNYNDTEQDGVGIADRVLLINGKEVDWSSDAGTHLRQALNLSLDAQKFSLAREVFYAQGNSPIIQASAAPVCLSGICLSSVAIKQLLGLYSGPILLRGVYNMAVVVLGFAGYFLCSDAVSQWLDYQSDRKVAAVSKSYATGGIEFYEKILAQNRILRTLMGKQGETMYSPSGNLFPNDYLRLKNAPYTSRRDRIKNALLQME</sequence>
<organism>
    <name type="scientific">Xenopus laevis</name>
    <name type="common">African clawed frog</name>
    <dbReference type="NCBI Taxonomy" id="8355"/>
    <lineage>
        <taxon>Eukaryota</taxon>
        <taxon>Metazoa</taxon>
        <taxon>Chordata</taxon>
        <taxon>Craniata</taxon>
        <taxon>Vertebrata</taxon>
        <taxon>Euteleostomi</taxon>
        <taxon>Amphibia</taxon>
        <taxon>Batrachia</taxon>
        <taxon>Anura</taxon>
        <taxon>Pipoidea</taxon>
        <taxon>Pipidae</taxon>
        <taxon>Xenopodinae</taxon>
        <taxon>Xenopus</taxon>
        <taxon>Xenopus</taxon>
    </lineage>
</organism>
<comment type="function">
    <text evidence="1">Plays a role in the early steps of cytochrome c oxidase subunit II (MT-CO2/COX2) maturation and is required for the stabilization of COX20 and the newly synthesized MT-CO2/COX2 protein.</text>
</comment>
<comment type="subcellular location">
    <subcellularLocation>
        <location evidence="1">Mitochondrion inner membrane</location>
        <topology evidence="2">Multi-pass membrane protein</topology>
    </subcellularLocation>
</comment>
<comment type="similarity">
    <text evidence="3">Belongs to the TMEM177 family.</text>
</comment>
<comment type="sequence caution" evidence="3">
    <conflict type="erroneous initiation">
        <sequence resource="EMBL-CDS" id="AAH81215"/>
    </conflict>
</comment>
<gene>
    <name type="primary">tmem177</name>
</gene>
<proteinExistence type="evidence at transcript level"/>
<name>TM177_XENLA</name>